<protein>
    <recommendedName>
        <fullName evidence="1">1-(5-phosphoribosyl)-5-[(5-phosphoribosylamino)methylideneamino] imidazole-4-carboxamide isomerase</fullName>
        <ecNumber evidence="1">5.3.1.16</ecNumber>
    </recommendedName>
    <alternativeName>
        <fullName evidence="1">Phosphoribosylformimino-5-aminoimidazole carboxamide ribotide isomerase</fullName>
    </alternativeName>
</protein>
<organism>
    <name type="scientific">Thermus thermophilus (strain ATCC 27634 / DSM 579 / HB8)</name>
    <dbReference type="NCBI Taxonomy" id="300852"/>
    <lineage>
        <taxon>Bacteria</taxon>
        <taxon>Thermotogati</taxon>
        <taxon>Deinococcota</taxon>
        <taxon>Deinococci</taxon>
        <taxon>Thermales</taxon>
        <taxon>Thermaceae</taxon>
        <taxon>Thermus</taxon>
    </lineage>
</organism>
<feature type="chain" id="PRO_0000229089" description="1-(5-phosphoribosyl)-5-[(5-phosphoribosylamino)methylideneamino] imidazole-4-carboxamide isomerase">
    <location>
        <begin position="1"/>
        <end position="235"/>
    </location>
</feature>
<feature type="active site" description="Proton acceptor" evidence="1">
    <location>
        <position position="8"/>
    </location>
</feature>
<feature type="active site" description="Proton donor" evidence="1">
    <location>
        <position position="128"/>
    </location>
</feature>
<keyword id="KW-0028">Amino-acid biosynthesis</keyword>
<keyword id="KW-0963">Cytoplasm</keyword>
<keyword id="KW-0368">Histidine biosynthesis</keyword>
<keyword id="KW-0413">Isomerase</keyword>
<keyword id="KW-1185">Reference proteome</keyword>
<reference key="1">
    <citation type="submission" date="2004-11" db="EMBL/GenBank/DDBJ databases">
        <title>Complete genome sequence of Thermus thermophilus HB8.</title>
        <authorList>
            <person name="Masui R."/>
            <person name="Kurokawa K."/>
            <person name="Nakagawa N."/>
            <person name="Tokunaga F."/>
            <person name="Koyama Y."/>
            <person name="Shibata T."/>
            <person name="Oshima T."/>
            <person name="Yokoyama S."/>
            <person name="Yasunaga T."/>
            <person name="Kuramitsu S."/>
        </authorList>
    </citation>
    <scope>NUCLEOTIDE SEQUENCE [LARGE SCALE GENOMIC DNA]</scope>
    <source>
        <strain>ATCC 27634 / DSM 579 / HB8</strain>
    </source>
</reference>
<sequence>MRLIPAVDLKSGKAVRLYEGDPARETPYGDPVEAALRFQEEGATLLHLVDLDRALGTGENREVVRRVAASLSIPFQLAGGIRSLEALQEALSLGASRAVVGTVAVKDPGLLARMLEAVGPDRLAVALDARGLEVVVSGWQEAVSASALDLLRAWAEMGVRTLLYTDVRRDGTLLGLDREVVARVRAAWPYELIVGGGIASPEDLHLLQALGVDGALVGKALYEGRIRLKEASWRS</sequence>
<name>HIS4_THET8</name>
<dbReference type="EC" id="5.3.1.16" evidence="1"/>
<dbReference type="EMBL" id="AP008226">
    <property type="protein sequence ID" value="BAD70988.1"/>
    <property type="molecule type" value="Genomic_DNA"/>
</dbReference>
<dbReference type="RefSeq" id="WP_011228483.1">
    <property type="nucleotide sequence ID" value="NC_006461.1"/>
</dbReference>
<dbReference type="RefSeq" id="YP_144431.1">
    <property type="nucleotide sequence ID" value="NC_006461.1"/>
</dbReference>
<dbReference type="SMR" id="Q5SJ49"/>
<dbReference type="EnsemblBacteria" id="BAD70988">
    <property type="protein sequence ID" value="BAD70988"/>
    <property type="gene ID" value="BAD70988"/>
</dbReference>
<dbReference type="GeneID" id="3169096"/>
<dbReference type="KEGG" id="ttj:TTHA1165"/>
<dbReference type="PATRIC" id="fig|300852.9.peg.1145"/>
<dbReference type="eggNOG" id="COG0106">
    <property type="taxonomic scope" value="Bacteria"/>
</dbReference>
<dbReference type="HOGENOM" id="CLU_048577_1_2_0"/>
<dbReference type="PhylomeDB" id="Q5SJ49"/>
<dbReference type="UniPathway" id="UPA00031">
    <property type="reaction ID" value="UER00009"/>
</dbReference>
<dbReference type="Proteomes" id="UP000000532">
    <property type="component" value="Chromosome"/>
</dbReference>
<dbReference type="GO" id="GO:0005737">
    <property type="term" value="C:cytoplasm"/>
    <property type="evidence" value="ECO:0007669"/>
    <property type="project" value="UniProtKB-SubCell"/>
</dbReference>
<dbReference type="GO" id="GO:0003949">
    <property type="term" value="F:1-(5-phosphoribosyl)-5-[(5-phosphoribosylamino)methylideneamino]imidazole-4-carboxamide isomerase activity"/>
    <property type="evidence" value="ECO:0007669"/>
    <property type="project" value="UniProtKB-UniRule"/>
</dbReference>
<dbReference type="GO" id="GO:0000105">
    <property type="term" value="P:L-histidine biosynthetic process"/>
    <property type="evidence" value="ECO:0007669"/>
    <property type="project" value="UniProtKB-UniRule"/>
</dbReference>
<dbReference type="GO" id="GO:0000162">
    <property type="term" value="P:L-tryptophan biosynthetic process"/>
    <property type="evidence" value="ECO:0007669"/>
    <property type="project" value="TreeGrafter"/>
</dbReference>
<dbReference type="CDD" id="cd04732">
    <property type="entry name" value="HisA"/>
    <property type="match status" value="1"/>
</dbReference>
<dbReference type="FunFam" id="3.20.20.70:FF:000009">
    <property type="entry name" value="1-(5-phosphoribosyl)-5-[(5-phosphoribosylamino)methylideneamino] imidazole-4-carboxamide isomerase"/>
    <property type="match status" value="1"/>
</dbReference>
<dbReference type="Gene3D" id="3.20.20.70">
    <property type="entry name" value="Aldolase class I"/>
    <property type="match status" value="1"/>
</dbReference>
<dbReference type="HAMAP" id="MF_01014">
    <property type="entry name" value="HisA"/>
    <property type="match status" value="1"/>
</dbReference>
<dbReference type="InterPro" id="IPR013785">
    <property type="entry name" value="Aldolase_TIM"/>
</dbReference>
<dbReference type="InterPro" id="IPR006062">
    <property type="entry name" value="His_biosynth"/>
</dbReference>
<dbReference type="InterPro" id="IPR006063">
    <property type="entry name" value="HisA_bact_arch"/>
</dbReference>
<dbReference type="InterPro" id="IPR044524">
    <property type="entry name" value="Isoase_HisA-like"/>
</dbReference>
<dbReference type="InterPro" id="IPR023016">
    <property type="entry name" value="Isoase_HisA-like_bact"/>
</dbReference>
<dbReference type="InterPro" id="IPR011060">
    <property type="entry name" value="RibuloseP-bd_barrel"/>
</dbReference>
<dbReference type="NCBIfam" id="TIGR00007">
    <property type="entry name" value="1-(5-phosphoribosyl)-5-[(5-phosphoribosylamino)methylideneamino]imidazole-4-carboxamide isomerase"/>
    <property type="match status" value="1"/>
</dbReference>
<dbReference type="PANTHER" id="PTHR43090">
    <property type="entry name" value="1-(5-PHOSPHORIBOSYL)-5-[(5-PHOSPHORIBOSYLAMINO)METHYLIDENEAMINO] IMIDAZOLE-4-CARBOXAMIDE ISOMERASE"/>
    <property type="match status" value="1"/>
</dbReference>
<dbReference type="PANTHER" id="PTHR43090:SF2">
    <property type="entry name" value="1-(5-PHOSPHORIBOSYL)-5-[(5-PHOSPHORIBOSYLAMINO)METHYLIDENEAMINO] IMIDAZOLE-4-CARBOXAMIDE ISOMERASE"/>
    <property type="match status" value="1"/>
</dbReference>
<dbReference type="Pfam" id="PF00977">
    <property type="entry name" value="His_biosynth"/>
    <property type="match status" value="1"/>
</dbReference>
<dbReference type="SUPFAM" id="SSF51366">
    <property type="entry name" value="Ribulose-phoshate binding barrel"/>
    <property type="match status" value="1"/>
</dbReference>
<accession>Q5SJ49</accession>
<gene>
    <name evidence="1" type="primary">hisA</name>
    <name type="ordered locus">TTHA1165</name>
</gene>
<evidence type="ECO:0000255" key="1">
    <source>
        <dbReference type="HAMAP-Rule" id="MF_01014"/>
    </source>
</evidence>
<proteinExistence type="inferred from homology"/>
<comment type="catalytic activity">
    <reaction evidence="1">
        <text>1-(5-phospho-beta-D-ribosyl)-5-[(5-phospho-beta-D-ribosylamino)methylideneamino]imidazole-4-carboxamide = 5-[(5-phospho-1-deoxy-D-ribulos-1-ylimino)methylamino]-1-(5-phospho-beta-D-ribosyl)imidazole-4-carboxamide</text>
        <dbReference type="Rhea" id="RHEA:15469"/>
        <dbReference type="ChEBI" id="CHEBI:58435"/>
        <dbReference type="ChEBI" id="CHEBI:58525"/>
        <dbReference type="EC" id="5.3.1.16"/>
    </reaction>
</comment>
<comment type="pathway">
    <text evidence="1">Amino-acid biosynthesis; L-histidine biosynthesis; L-histidine from 5-phospho-alpha-D-ribose 1-diphosphate: step 4/9.</text>
</comment>
<comment type="subcellular location">
    <subcellularLocation>
        <location evidence="1">Cytoplasm</location>
    </subcellularLocation>
</comment>
<comment type="similarity">
    <text evidence="1">Belongs to the HisA/HisF family.</text>
</comment>